<comment type="similarity">
    <text evidence="1">Belongs to the eukaryotic ribosomal protein eL38 family.</text>
</comment>
<evidence type="ECO:0000305" key="1"/>
<gene>
    <name type="primary">RPL38</name>
    <name type="ordered locus">TP01_0293</name>
</gene>
<protein>
    <recommendedName>
        <fullName evidence="1">Large ribosomal subunit protein eL38</fullName>
    </recommendedName>
    <alternativeName>
        <fullName>60S ribosomal protein L38</fullName>
    </alternativeName>
</protein>
<keyword id="KW-1185">Reference proteome</keyword>
<keyword id="KW-0687">Ribonucleoprotein</keyword>
<keyword id="KW-0689">Ribosomal protein</keyword>
<reference key="1">
    <citation type="journal article" date="2005" name="Science">
        <title>Genome sequence of Theileria parva, a bovine pathogen that transforms lymphocytes.</title>
        <authorList>
            <person name="Gardner M.J."/>
            <person name="Bishop R."/>
            <person name="Shah T."/>
            <person name="de Villiers E.P."/>
            <person name="Carlton J.M."/>
            <person name="Hall N."/>
            <person name="Ren Q."/>
            <person name="Paulsen I.T."/>
            <person name="Pain A."/>
            <person name="Berriman M."/>
            <person name="Wilson R.J.M."/>
            <person name="Sato S."/>
            <person name="Ralph S.A."/>
            <person name="Mann D.J."/>
            <person name="Xiong Z."/>
            <person name="Shallom S.J."/>
            <person name="Weidman J."/>
            <person name="Jiang L."/>
            <person name="Lynn J."/>
            <person name="Weaver B."/>
            <person name="Shoaibi A."/>
            <person name="Domingo A.R."/>
            <person name="Wasawo D."/>
            <person name="Crabtree J."/>
            <person name="Wortman J.R."/>
            <person name="Haas B."/>
            <person name="Angiuoli S.V."/>
            <person name="Creasy T.H."/>
            <person name="Lu C."/>
            <person name="Suh B."/>
            <person name="Silva J.C."/>
            <person name="Utterback T.R."/>
            <person name="Feldblyum T.V."/>
            <person name="Pertea M."/>
            <person name="Allen J."/>
            <person name="Nierman W.C."/>
            <person name="Taracha E.L.N."/>
            <person name="Salzberg S.L."/>
            <person name="White O.R."/>
            <person name="Fitzhugh H.A."/>
            <person name="Morzaria S."/>
            <person name="Venter J.C."/>
            <person name="Fraser C.M."/>
            <person name="Nene V."/>
        </authorList>
    </citation>
    <scope>NUCLEOTIDE SEQUENCE [LARGE SCALE GENOMIC DNA]</scope>
    <source>
        <strain>Muguga</strain>
    </source>
</reference>
<accession>Q4N921</accession>
<name>RL38_THEPA</name>
<proteinExistence type="inferred from homology"/>
<feature type="chain" id="PRO_0000319569" description="Large ribosomal subunit protein eL38">
    <location>
        <begin position="1"/>
        <end position="79"/>
    </location>
</feature>
<sequence length="79" mass="9054">MPKELKELKDYLSVLKRPDARSVVVYKKKSKGGLLSTKFKVRCSRYLYTFSVPNQVKAAKVEATIPSHLEKKVITNKKN</sequence>
<organism>
    <name type="scientific">Theileria parva</name>
    <name type="common">East coast fever infection agent</name>
    <dbReference type="NCBI Taxonomy" id="5875"/>
    <lineage>
        <taxon>Eukaryota</taxon>
        <taxon>Sar</taxon>
        <taxon>Alveolata</taxon>
        <taxon>Apicomplexa</taxon>
        <taxon>Aconoidasida</taxon>
        <taxon>Piroplasmida</taxon>
        <taxon>Theileriidae</taxon>
        <taxon>Theileria</taxon>
    </lineage>
</organism>
<dbReference type="EMBL" id="AAGK01000001">
    <property type="protein sequence ID" value="EAN33537.1"/>
    <property type="molecule type" value="Genomic_DNA"/>
</dbReference>
<dbReference type="RefSeq" id="XP_765820.1">
    <property type="nucleotide sequence ID" value="XM_760727.1"/>
</dbReference>
<dbReference type="SMR" id="Q4N921"/>
<dbReference type="FunCoup" id="Q4N921">
    <property type="interactions" value="358"/>
</dbReference>
<dbReference type="STRING" id="5875.Q4N921"/>
<dbReference type="EnsemblProtists" id="EAN33537">
    <property type="protein sequence ID" value="EAN33537"/>
    <property type="gene ID" value="TP01_0293"/>
</dbReference>
<dbReference type="GeneID" id="3502733"/>
<dbReference type="KEGG" id="tpv:TP01_0293"/>
<dbReference type="VEuPathDB" id="PiroplasmaDB:TpMuguga_01g00293"/>
<dbReference type="eggNOG" id="KOG3499">
    <property type="taxonomic scope" value="Eukaryota"/>
</dbReference>
<dbReference type="InParanoid" id="Q4N921"/>
<dbReference type="OMA" id="RCHRFIY"/>
<dbReference type="Proteomes" id="UP000001949">
    <property type="component" value="Unassembled WGS sequence"/>
</dbReference>
<dbReference type="GO" id="GO:0022625">
    <property type="term" value="C:cytosolic large ribosomal subunit"/>
    <property type="evidence" value="ECO:0007669"/>
    <property type="project" value="TreeGrafter"/>
</dbReference>
<dbReference type="GO" id="GO:0003735">
    <property type="term" value="F:structural constituent of ribosome"/>
    <property type="evidence" value="ECO:0007669"/>
    <property type="project" value="InterPro"/>
</dbReference>
<dbReference type="GO" id="GO:0022618">
    <property type="term" value="P:protein-RNA complex assembly"/>
    <property type="evidence" value="ECO:0007669"/>
    <property type="project" value="TreeGrafter"/>
</dbReference>
<dbReference type="GO" id="GO:0006412">
    <property type="term" value="P:translation"/>
    <property type="evidence" value="ECO:0007669"/>
    <property type="project" value="InterPro"/>
</dbReference>
<dbReference type="Gene3D" id="3.30.720.90">
    <property type="match status" value="1"/>
</dbReference>
<dbReference type="InterPro" id="IPR002675">
    <property type="entry name" value="Ribosomal_eL38"/>
</dbReference>
<dbReference type="InterPro" id="IPR038464">
    <property type="entry name" value="Ribosomal_eL38_sf"/>
</dbReference>
<dbReference type="PANTHER" id="PTHR10965">
    <property type="entry name" value="60S RIBOSOMAL PROTEIN L38"/>
    <property type="match status" value="1"/>
</dbReference>
<dbReference type="PANTHER" id="PTHR10965:SF0">
    <property type="entry name" value="LARGE RIBOSOMAL SUBUNIT PROTEIN EL38"/>
    <property type="match status" value="1"/>
</dbReference>
<dbReference type="Pfam" id="PF01781">
    <property type="entry name" value="Ribosomal_L38e"/>
    <property type="match status" value="1"/>
</dbReference>